<gene>
    <name type="primary">ATG18</name>
    <name type="ORF">MGG_03139</name>
</gene>
<reference key="1">
    <citation type="journal article" date="2005" name="Nature">
        <title>The genome sequence of the rice blast fungus Magnaporthe grisea.</title>
        <authorList>
            <person name="Dean R.A."/>
            <person name="Talbot N.J."/>
            <person name="Ebbole D.J."/>
            <person name="Farman M.L."/>
            <person name="Mitchell T.K."/>
            <person name="Orbach M.J."/>
            <person name="Thon M.R."/>
            <person name="Kulkarni R."/>
            <person name="Xu J.-R."/>
            <person name="Pan H."/>
            <person name="Read N.D."/>
            <person name="Lee Y.-H."/>
            <person name="Carbone I."/>
            <person name="Brown D."/>
            <person name="Oh Y.Y."/>
            <person name="Donofrio N."/>
            <person name="Jeong J.S."/>
            <person name="Soanes D.M."/>
            <person name="Djonovic S."/>
            <person name="Kolomiets E."/>
            <person name="Rehmeyer C."/>
            <person name="Li W."/>
            <person name="Harding M."/>
            <person name="Kim S."/>
            <person name="Lebrun M.-H."/>
            <person name="Bohnert H."/>
            <person name="Coughlan S."/>
            <person name="Butler J."/>
            <person name="Calvo S.E."/>
            <person name="Ma L.-J."/>
            <person name="Nicol R."/>
            <person name="Purcell S."/>
            <person name="Nusbaum C."/>
            <person name="Galagan J.E."/>
            <person name="Birren B.W."/>
        </authorList>
    </citation>
    <scope>NUCLEOTIDE SEQUENCE [LARGE SCALE GENOMIC DNA]</scope>
    <source>
        <strain>70-15 / ATCC MYA-4617 / FGSC 8958</strain>
    </source>
</reference>
<accession>Q524W4</accession>
<accession>A4R7V5</accession>
<accession>G4NAU7</accession>
<sequence>MATATLNFITFNQDHGCLAVGTSRGFRIYHTEPFSKIFSSEDGNVSIIEMLFSTSLVALILSPRHLIIQNTKRGSVICELTFPSAVLAVRLNRKRLAVVLEDEIYLYDIANMSLLFTIATSPNPSAICALSPSSENCFLAYPLPKPREDKDDKRPSHAPPLPTYIPPTSGDVLIFDAITLKAVNVIEAHRSPLSCIAINSEGTLLATASETGTIIRVFTVPKGQKLYQFRRGTYPSTIYSMSFNLSSTLLCVSSTSDTVHIFRLGGPNNGASGAAGAGSAGEVLAASPGQDITGSPRADRWSRSRSYDSGNESPGSGSEANDIAGSPSPRDRPTAANRRQSGSFSNILRRSSQIMGRSVAGVVGSYLPQTVTEMWEPARDFAFIKIPKSSAARQHNNPGATPSLPIAGEPLRSVVAMSSSSPQVMVVTSDGKFYVYNINMETGGEGYLVRQYSILENDDKHDSSSTYES</sequence>
<dbReference type="EMBL" id="CM001234">
    <property type="protein sequence ID" value="EHA50539.1"/>
    <property type="molecule type" value="Genomic_DNA"/>
</dbReference>
<dbReference type="RefSeq" id="XP_003716858.1">
    <property type="nucleotide sequence ID" value="XM_003716810.1"/>
</dbReference>
<dbReference type="SMR" id="Q524W4"/>
<dbReference type="FunCoup" id="Q524W4">
    <property type="interactions" value="550"/>
</dbReference>
<dbReference type="STRING" id="242507.Q524W4"/>
<dbReference type="EnsemblFungi" id="MGG_03139T0">
    <property type="protein sequence ID" value="MGG_03139T0"/>
    <property type="gene ID" value="MGG_03139"/>
</dbReference>
<dbReference type="GeneID" id="2676412"/>
<dbReference type="KEGG" id="mgr:MGG_03139"/>
<dbReference type="VEuPathDB" id="FungiDB:MGG_03139"/>
<dbReference type="eggNOG" id="KOG2110">
    <property type="taxonomic scope" value="Eukaryota"/>
</dbReference>
<dbReference type="HOGENOM" id="CLU_025895_5_2_1"/>
<dbReference type="InParanoid" id="Q524W4"/>
<dbReference type="OMA" id="NIAILEM"/>
<dbReference type="OrthoDB" id="1667587at2759"/>
<dbReference type="PHI-base" id="PHI:2084"/>
<dbReference type="Proteomes" id="UP000009058">
    <property type="component" value="Chromosome 4"/>
</dbReference>
<dbReference type="GO" id="GO:0010008">
    <property type="term" value="C:endosome membrane"/>
    <property type="evidence" value="ECO:0007669"/>
    <property type="project" value="UniProtKB-SubCell"/>
</dbReference>
<dbReference type="GO" id="GO:0034045">
    <property type="term" value="C:phagophore assembly site membrane"/>
    <property type="evidence" value="ECO:0007669"/>
    <property type="project" value="UniProtKB-SubCell"/>
</dbReference>
<dbReference type="GO" id="GO:0005774">
    <property type="term" value="C:vacuolar membrane"/>
    <property type="evidence" value="ECO:0007669"/>
    <property type="project" value="UniProtKB-SubCell"/>
</dbReference>
<dbReference type="GO" id="GO:0006914">
    <property type="term" value="P:autophagy"/>
    <property type="evidence" value="ECO:0007669"/>
    <property type="project" value="UniProtKB-KW"/>
</dbReference>
<dbReference type="GO" id="GO:0015031">
    <property type="term" value="P:protein transport"/>
    <property type="evidence" value="ECO:0007669"/>
    <property type="project" value="UniProtKB-KW"/>
</dbReference>
<dbReference type="Gene3D" id="2.130.10.10">
    <property type="entry name" value="YVTN repeat-like/Quinoprotein amine dehydrogenase"/>
    <property type="match status" value="1"/>
</dbReference>
<dbReference type="InterPro" id="IPR048720">
    <property type="entry name" value="PROPPIN"/>
</dbReference>
<dbReference type="InterPro" id="IPR015943">
    <property type="entry name" value="WD40/YVTN_repeat-like_dom_sf"/>
</dbReference>
<dbReference type="InterPro" id="IPR036322">
    <property type="entry name" value="WD40_repeat_dom_sf"/>
</dbReference>
<dbReference type="InterPro" id="IPR001680">
    <property type="entry name" value="WD40_rpt"/>
</dbReference>
<dbReference type="PANTHER" id="PTHR11227">
    <property type="entry name" value="WD-REPEAT PROTEIN INTERACTING WITH PHOSPHOINOSIDES WIPI -RELATED"/>
    <property type="match status" value="1"/>
</dbReference>
<dbReference type="Pfam" id="PF21032">
    <property type="entry name" value="PROPPIN"/>
    <property type="match status" value="2"/>
</dbReference>
<dbReference type="SMART" id="SM00320">
    <property type="entry name" value="WD40"/>
    <property type="match status" value="3"/>
</dbReference>
<dbReference type="SUPFAM" id="SSF50978">
    <property type="entry name" value="WD40 repeat-like"/>
    <property type="match status" value="1"/>
</dbReference>
<name>ATG18_PYRO7</name>
<proteinExistence type="inferred from homology"/>
<protein>
    <recommendedName>
        <fullName>Autophagy-related protein 18</fullName>
    </recommendedName>
</protein>
<feature type="chain" id="PRO_0000050868" description="Autophagy-related protein 18">
    <location>
        <begin position="1"/>
        <end position="469"/>
    </location>
</feature>
<feature type="repeat" description="WD 1">
    <location>
        <begin position="188"/>
        <end position="228"/>
    </location>
</feature>
<feature type="repeat" description="WD 2">
    <location>
        <begin position="233"/>
        <end position="272"/>
    </location>
</feature>
<feature type="region of interest" description="Disordered" evidence="3">
    <location>
        <begin position="285"/>
        <end position="348"/>
    </location>
</feature>
<feature type="short sequence motif" description="L/FRRG motif" evidence="2">
    <location>
        <begin position="229"/>
        <end position="233"/>
    </location>
</feature>
<feature type="compositionally biased region" description="Basic and acidic residues" evidence="3">
    <location>
        <begin position="297"/>
        <end position="306"/>
    </location>
</feature>
<feature type="compositionally biased region" description="Polar residues" evidence="3">
    <location>
        <begin position="307"/>
        <end position="319"/>
    </location>
</feature>
<feature type="compositionally biased region" description="Polar residues" evidence="3">
    <location>
        <begin position="337"/>
        <end position="348"/>
    </location>
</feature>
<evidence type="ECO:0000250" key="1"/>
<evidence type="ECO:0000250" key="2">
    <source>
        <dbReference type="UniProtKB" id="P43601"/>
    </source>
</evidence>
<evidence type="ECO:0000256" key="3">
    <source>
        <dbReference type="SAM" id="MobiDB-lite"/>
    </source>
</evidence>
<evidence type="ECO:0000305" key="4"/>
<keyword id="KW-0072">Autophagy</keyword>
<keyword id="KW-0967">Endosome</keyword>
<keyword id="KW-0472">Membrane</keyword>
<keyword id="KW-0653">Protein transport</keyword>
<keyword id="KW-1185">Reference proteome</keyword>
<keyword id="KW-0677">Repeat</keyword>
<keyword id="KW-0813">Transport</keyword>
<keyword id="KW-0926">Vacuole</keyword>
<keyword id="KW-0853">WD repeat</keyword>
<comment type="function">
    <text evidence="1">The PI(3,5)P2 regulatory complex regulates both the synthesis and turnover of phosphatidylinositol 3,5-bisphosphate (PtdIns(3,5)P2). Necessary for proper vacuole morphology. Plays an important role in osmotically-induced vacuole fragmentation. Required for cytoplasm to vacuole transport (Cvt) vesicle formation, pexophagy and starvation-induced autophagy. Involved in correct ATG9 trafficking to the pre-autophagosomal structure. Might also be involved in premeiotic DNA replication (By similarity).</text>
</comment>
<comment type="subunit">
    <text evidence="1">Component of the PI(3,5)P2 regulatory complex.</text>
</comment>
<comment type="subcellular location">
    <subcellularLocation>
        <location evidence="1">Preautophagosomal structure membrane</location>
        <topology evidence="1">Peripheral membrane protein</topology>
    </subcellularLocation>
    <subcellularLocation>
        <location evidence="1">Vacuole membrane</location>
        <topology evidence="1">Peripheral membrane protein</topology>
    </subcellularLocation>
    <subcellularLocation>
        <location evidence="1">Endosome membrane</location>
        <topology evidence="1">Peripheral membrane protein</topology>
    </subcellularLocation>
</comment>
<comment type="domain">
    <text evidence="1">The N-terminus might form a beta-propeller domain involved in specific binding to phosphatidylinositol 3,5-bisphosphate (PIP2), leading to the association of the protein to the membrane.</text>
</comment>
<comment type="domain">
    <text evidence="2">The L/FRRG motif is essential for the cytoplasm to vacuole transport (Cvt) pathway, for the recruitment of ATG8 and ATG16 to the PAS in nutrient-rich medium, and for its recruitment to and dissociation from the PAS under starvation conditions.</text>
</comment>
<comment type="similarity">
    <text evidence="4">Belongs to the WD repeat PROPPIN family.</text>
</comment>
<organism>
    <name type="scientific">Pyricularia oryzae (strain 70-15 / ATCC MYA-4617 / FGSC 8958)</name>
    <name type="common">Rice blast fungus</name>
    <name type="synonym">Magnaporthe oryzae</name>
    <dbReference type="NCBI Taxonomy" id="242507"/>
    <lineage>
        <taxon>Eukaryota</taxon>
        <taxon>Fungi</taxon>
        <taxon>Dikarya</taxon>
        <taxon>Ascomycota</taxon>
        <taxon>Pezizomycotina</taxon>
        <taxon>Sordariomycetes</taxon>
        <taxon>Sordariomycetidae</taxon>
        <taxon>Magnaporthales</taxon>
        <taxon>Pyriculariaceae</taxon>
        <taxon>Pyricularia</taxon>
    </lineage>
</organism>